<organism>
    <name type="scientific">Bacillus subtilis (strain 168)</name>
    <dbReference type="NCBI Taxonomy" id="224308"/>
    <lineage>
        <taxon>Bacteria</taxon>
        <taxon>Bacillati</taxon>
        <taxon>Bacillota</taxon>
        <taxon>Bacilli</taxon>
        <taxon>Bacillales</taxon>
        <taxon>Bacillaceae</taxon>
        <taxon>Bacillus</taxon>
    </lineage>
</organism>
<dbReference type="EMBL" id="D32216">
    <property type="protein sequence ID" value="BAA06932.1"/>
    <property type="molecule type" value="Genomic_DNA"/>
</dbReference>
<dbReference type="EMBL" id="D84432">
    <property type="protein sequence ID" value="BAA12394.1"/>
    <property type="molecule type" value="Genomic_DNA"/>
</dbReference>
<dbReference type="EMBL" id="AL009126">
    <property type="protein sequence ID" value="CAB14561.1"/>
    <property type="molecule type" value="Genomic_DNA"/>
</dbReference>
<dbReference type="PIR" id="B69946">
    <property type="entry name" value="B69946"/>
</dbReference>
<dbReference type="RefSeq" id="NP_390497.1">
    <property type="nucleotide sequence ID" value="NC_000964.3"/>
</dbReference>
<dbReference type="SMR" id="P45915"/>
<dbReference type="FunCoup" id="P45915">
    <property type="interactions" value="42"/>
</dbReference>
<dbReference type="STRING" id="224308.BSU26200"/>
<dbReference type="PaxDb" id="224308-BSU26200"/>
<dbReference type="EnsemblBacteria" id="CAB14561">
    <property type="protein sequence ID" value="CAB14561"/>
    <property type="gene ID" value="BSU_26200"/>
</dbReference>
<dbReference type="GeneID" id="937704"/>
<dbReference type="KEGG" id="bsu:BSU26200"/>
<dbReference type="PATRIC" id="fig|224308.179.peg.2846"/>
<dbReference type="eggNOG" id="COG5484">
    <property type="taxonomic scope" value="Bacteria"/>
</dbReference>
<dbReference type="InParanoid" id="P45915"/>
<dbReference type="OrthoDB" id="7358785at2"/>
<dbReference type="PhylomeDB" id="P45915"/>
<dbReference type="BioCyc" id="BSUB:BSU26200-MONOMER"/>
<dbReference type="Proteomes" id="UP000001570">
    <property type="component" value="Chromosome"/>
</dbReference>
<dbReference type="Gene3D" id="1.10.10.60">
    <property type="entry name" value="Homeodomain-like"/>
    <property type="match status" value="1"/>
</dbReference>
<dbReference type="InterPro" id="IPR018925">
    <property type="entry name" value="XtmA-like_N"/>
</dbReference>
<dbReference type="NCBIfam" id="NF040601">
    <property type="entry name" value="TerS_not_xtmA"/>
    <property type="match status" value="1"/>
</dbReference>
<dbReference type="Pfam" id="PF10668">
    <property type="entry name" value="Phage_terminase"/>
    <property type="match status" value="1"/>
</dbReference>
<reference key="1">
    <citation type="journal article" date="1995" name="Microbiology">
        <title>Complete nucleotide sequence of a skin element excised by DNA rearrangement during sporulation in Bacillus subtilis.</title>
        <authorList>
            <person name="Takemaru K."/>
            <person name="Mizuno M."/>
            <person name="Sato T."/>
            <person name="Takeuchi M."/>
            <person name="Kobayashi Y."/>
        </authorList>
    </citation>
    <scope>NUCLEOTIDE SEQUENCE [GENOMIC DNA]</scope>
    <source>
        <strain>168 / JH642</strain>
    </source>
</reference>
<reference key="2">
    <citation type="journal article" date="1996" name="Microbiology">
        <title>Systematic sequencing of the 283 kb 210 degrees-232 degrees region of the Bacillus subtilis genome containing the skin element and many sporulation genes.</title>
        <authorList>
            <person name="Mizuno M."/>
            <person name="Masuda S."/>
            <person name="Takemaru K."/>
            <person name="Hosono S."/>
            <person name="Sato T."/>
            <person name="Takeuchi M."/>
            <person name="Kobayashi Y."/>
        </authorList>
    </citation>
    <scope>NUCLEOTIDE SEQUENCE [GENOMIC DNA]</scope>
    <source>
        <strain>168 / JH642</strain>
    </source>
</reference>
<reference key="3">
    <citation type="journal article" date="1997" name="Nature">
        <title>The complete genome sequence of the Gram-positive bacterium Bacillus subtilis.</title>
        <authorList>
            <person name="Kunst F."/>
            <person name="Ogasawara N."/>
            <person name="Moszer I."/>
            <person name="Albertini A.M."/>
            <person name="Alloni G."/>
            <person name="Azevedo V."/>
            <person name="Bertero M.G."/>
            <person name="Bessieres P."/>
            <person name="Bolotin A."/>
            <person name="Borchert S."/>
            <person name="Borriss R."/>
            <person name="Boursier L."/>
            <person name="Brans A."/>
            <person name="Braun M."/>
            <person name="Brignell S.C."/>
            <person name="Bron S."/>
            <person name="Brouillet S."/>
            <person name="Bruschi C.V."/>
            <person name="Caldwell B."/>
            <person name="Capuano V."/>
            <person name="Carter N.M."/>
            <person name="Choi S.-K."/>
            <person name="Codani J.-J."/>
            <person name="Connerton I.F."/>
            <person name="Cummings N.J."/>
            <person name="Daniel R.A."/>
            <person name="Denizot F."/>
            <person name="Devine K.M."/>
            <person name="Duesterhoeft A."/>
            <person name="Ehrlich S.D."/>
            <person name="Emmerson P.T."/>
            <person name="Entian K.-D."/>
            <person name="Errington J."/>
            <person name="Fabret C."/>
            <person name="Ferrari E."/>
            <person name="Foulger D."/>
            <person name="Fritz C."/>
            <person name="Fujita M."/>
            <person name="Fujita Y."/>
            <person name="Fuma S."/>
            <person name="Galizzi A."/>
            <person name="Galleron N."/>
            <person name="Ghim S.-Y."/>
            <person name="Glaser P."/>
            <person name="Goffeau A."/>
            <person name="Golightly E.J."/>
            <person name="Grandi G."/>
            <person name="Guiseppi G."/>
            <person name="Guy B.J."/>
            <person name="Haga K."/>
            <person name="Haiech J."/>
            <person name="Harwood C.R."/>
            <person name="Henaut A."/>
            <person name="Hilbert H."/>
            <person name="Holsappel S."/>
            <person name="Hosono S."/>
            <person name="Hullo M.-F."/>
            <person name="Itaya M."/>
            <person name="Jones L.-M."/>
            <person name="Joris B."/>
            <person name="Karamata D."/>
            <person name="Kasahara Y."/>
            <person name="Klaerr-Blanchard M."/>
            <person name="Klein C."/>
            <person name="Kobayashi Y."/>
            <person name="Koetter P."/>
            <person name="Koningstein G."/>
            <person name="Krogh S."/>
            <person name="Kumano M."/>
            <person name="Kurita K."/>
            <person name="Lapidus A."/>
            <person name="Lardinois S."/>
            <person name="Lauber J."/>
            <person name="Lazarevic V."/>
            <person name="Lee S.-M."/>
            <person name="Levine A."/>
            <person name="Liu H."/>
            <person name="Masuda S."/>
            <person name="Mauel C."/>
            <person name="Medigue C."/>
            <person name="Medina N."/>
            <person name="Mellado R.P."/>
            <person name="Mizuno M."/>
            <person name="Moestl D."/>
            <person name="Nakai S."/>
            <person name="Noback M."/>
            <person name="Noone D."/>
            <person name="O'Reilly M."/>
            <person name="Ogawa K."/>
            <person name="Ogiwara A."/>
            <person name="Oudega B."/>
            <person name="Park S.-H."/>
            <person name="Parro V."/>
            <person name="Pohl T.M."/>
            <person name="Portetelle D."/>
            <person name="Porwollik S."/>
            <person name="Prescott A.M."/>
            <person name="Presecan E."/>
            <person name="Pujic P."/>
            <person name="Purnelle B."/>
            <person name="Rapoport G."/>
            <person name="Rey M."/>
            <person name="Reynolds S."/>
            <person name="Rieger M."/>
            <person name="Rivolta C."/>
            <person name="Rocha E."/>
            <person name="Roche B."/>
            <person name="Rose M."/>
            <person name="Sadaie Y."/>
            <person name="Sato T."/>
            <person name="Scanlan E."/>
            <person name="Schleich S."/>
            <person name="Schroeter R."/>
            <person name="Scoffone F."/>
            <person name="Sekiguchi J."/>
            <person name="Sekowska A."/>
            <person name="Seror S.J."/>
            <person name="Serror P."/>
            <person name="Shin B.-S."/>
            <person name="Soldo B."/>
            <person name="Sorokin A."/>
            <person name="Tacconi E."/>
            <person name="Takagi T."/>
            <person name="Takahashi H."/>
            <person name="Takemaru K."/>
            <person name="Takeuchi M."/>
            <person name="Tamakoshi A."/>
            <person name="Tanaka T."/>
            <person name="Terpstra P."/>
            <person name="Tognoni A."/>
            <person name="Tosato V."/>
            <person name="Uchiyama S."/>
            <person name="Vandenbol M."/>
            <person name="Vannier F."/>
            <person name="Vassarotti A."/>
            <person name="Viari A."/>
            <person name="Wambutt R."/>
            <person name="Wedler E."/>
            <person name="Wedler H."/>
            <person name="Weitzenegger T."/>
            <person name="Winters P."/>
            <person name="Wipat A."/>
            <person name="Yamamoto H."/>
            <person name="Yamane K."/>
            <person name="Yasumoto K."/>
            <person name="Yata K."/>
            <person name="Yoshida K."/>
            <person name="Yoshikawa H.-F."/>
            <person name="Zumstein E."/>
            <person name="Yoshikawa H."/>
            <person name="Danchin A."/>
        </authorList>
    </citation>
    <scope>NUCLEOTIDE SEQUENCE [LARGE SCALE GENOMIC DNA]</scope>
    <source>
        <strain>168</strain>
    </source>
</reference>
<reference key="4">
    <citation type="journal article" date="1995" name="Gene">
        <title>Analysis of a Bacillus subtilis genome fragment using a co-operative computer system prototype.</title>
        <authorList>
            <person name="Medigue C."/>
            <person name="Moszer I."/>
            <person name="Viari A."/>
            <person name="Danchin A."/>
        </authorList>
    </citation>
    <scope>IDENTIFICATION</scope>
    <scope>DISCUSSION OF SEQUENCE</scope>
</reference>
<sequence>MVDKHIQAYKDYAKGMKYKDLAEKYGVSVNTIKSWKQRHGWQRKKGAPLKKGVHTKKVGAPLGNKNALGNNGGAPKGNQNAVTHGFFSKFLPEETLSIMEGIQERSPVDMIWDQIQIQYAAIIRAQKIMFVSDKQEMIKELKKKKSVLSETNEVEEEEFEFQFSWDRHATFLNAQSRAMAELRNLIKQFDELAHSEDERRLKLEHMRLNINKKKIEIEELTEEDKPFEITIVNKGDDSD</sequence>
<protein>
    <recommendedName>
        <fullName>Uncharacterized protein YqaS</fullName>
    </recommendedName>
</protein>
<accession>P45915</accession>
<gene>
    <name type="primary">yqaS</name>
    <name type="ordered locus">BSU26200</name>
</gene>
<proteinExistence type="predicted"/>
<feature type="chain" id="PRO_0000049750" description="Uncharacterized protein YqaS">
    <location>
        <begin position="1"/>
        <end position="239"/>
    </location>
</feature>
<name>YQAS_BACSU</name>
<keyword id="KW-1185">Reference proteome</keyword>